<organism>
    <name type="scientific">Rhizobium leguminosarum bv. trifolii (strain WSM2304)</name>
    <dbReference type="NCBI Taxonomy" id="395492"/>
    <lineage>
        <taxon>Bacteria</taxon>
        <taxon>Pseudomonadati</taxon>
        <taxon>Pseudomonadota</taxon>
        <taxon>Alphaproteobacteria</taxon>
        <taxon>Hyphomicrobiales</taxon>
        <taxon>Rhizobiaceae</taxon>
        <taxon>Rhizobium/Agrobacterium group</taxon>
        <taxon>Rhizobium</taxon>
    </lineage>
</organism>
<dbReference type="EMBL" id="CP001191">
    <property type="protein sequence ID" value="ACI54616.1"/>
    <property type="molecule type" value="Genomic_DNA"/>
</dbReference>
<dbReference type="RefSeq" id="WP_003587203.1">
    <property type="nucleotide sequence ID" value="NC_011369.1"/>
</dbReference>
<dbReference type="SMR" id="B5ZYS5"/>
<dbReference type="STRING" id="395492.Rleg2_1322"/>
<dbReference type="KEGG" id="rlt:Rleg2_1322"/>
<dbReference type="eggNOG" id="COG0244">
    <property type="taxonomic scope" value="Bacteria"/>
</dbReference>
<dbReference type="HOGENOM" id="CLU_092227_0_0_5"/>
<dbReference type="Proteomes" id="UP000008330">
    <property type="component" value="Chromosome"/>
</dbReference>
<dbReference type="GO" id="GO:1990904">
    <property type="term" value="C:ribonucleoprotein complex"/>
    <property type="evidence" value="ECO:0007669"/>
    <property type="project" value="UniProtKB-KW"/>
</dbReference>
<dbReference type="GO" id="GO:0005840">
    <property type="term" value="C:ribosome"/>
    <property type="evidence" value="ECO:0007669"/>
    <property type="project" value="UniProtKB-KW"/>
</dbReference>
<dbReference type="GO" id="GO:0070180">
    <property type="term" value="F:large ribosomal subunit rRNA binding"/>
    <property type="evidence" value="ECO:0007669"/>
    <property type="project" value="UniProtKB-UniRule"/>
</dbReference>
<dbReference type="GO" id="GO:0006412">
    <property type="term" value="P:translation"/>
    <property type="evidence" value="ECO:0007669"/>
    <property type="project" value="UniProtKB-UniRule"/>
</dbReference>
<dbReference type="CDD" id="cd05797">
    <property type="entry name" value="Ribosomal_L10"/>
    <property type="match status" value="1"/>
</dbReference>
<dbReference type="Gene3D" id="3.30.70.1730">
    <property type="match status" value="1"/>
</dbReference>
<dbReference type="Gene3D" id="6.10.250.290">
    <property type="match status" value="1"/>
</dbReference>
<dbReference type="HAMAP" id="MF_00362">
    <property type="entry name" value="Ribosomal_uL10"/>
    <property type="match status" value="1"/>
</dbReference>
<dbReference type="InterPro" id="IPR001790">
    <property type="entry name" value="Ribosomal_uL10"/>
</dbReference>
<dbReference type="InterPro" id="IPR043141">
    <property type="entry name" value="Ribosomal_uL10-like_sf"/>
</dbReference>
<dbReference type="InterPro" id="IPR022973">
    <property type="entry name" value="Ribosomal_uL10_bac"/>
</dbReference>
<dbReference type="InterPro" id="IPR047865">
    <property type="entry name" value="Ribosomal_uL10_bac_type"/>
</dbReference>
<dbReference type="NCBIfam" id="NF000955">
    <property type="entry name" value="PRK00099.1-1"/>
    <property type="match status" value="1"/>
</dbReference>
<dbReference type="PANTHER" id="PTHR11560">
    <property type="entry name" value="39S RIBOSOMAL PROTEIN L10, MITOCHONDRIAL"/>
    <property type="match status" value="1"/>
</dbReference>
<dbReference type="Pfam" id="PF00466">
    <property type="entry name" value="Ribosomal_L10"/>
    <property type="match status" value="1"/>
</dbReference>
<dbReference type="SUPFAM" id="SSF160369">
    <property type="entry name" value="Ribosomal protein L10-like"/>
    <property type="match status" value="1"/>
</dbReference>
<name>RL10_RHILW</name>
<gene>
    <name evidence="1" type="primary">rplJ</name>
    <name type="ordered locus">Rleg2_1322</name>
</gene>
<sequence length="172" mass="18115">MERAEKREFVTELNEVFKASGSVVVAHYAGATVAQMNDFRSKMRAAGGTVKVAKNRLAKIALQGTEAEGITDLFKGQTLIAYSTDPITAPKVVMDFAKTNDKIVVLGGAMGTTTLNADAVKSLATLPSLDELRAKLLGMIQTPATRIAGVVAAPASQLARVFAAYAKKDEAA</sequence>
<feature type="chain" id="PRO_1000121003" description="Large ribosomal subunit protein uL10">
    <location>
        <begin position="1"/>
        <end position="172"/>
    </location>
</feature>
<proteinExistence type="inferred from homology"/>
<reference key="1">
    <citation type="journal article" date="2010" name="Stand. Genomic Sci.">
        <title>Complete genome sequence of Rhizobium leguminosarum bv trifolii strain WSM2304, an effective microsymbiont of the South American clover Trifolium polymorphum.</title>
        <authorList>
            <person name="Reeve W."/>
            <person name="O'Hara G."/>
            <person name="Chain P."/>
            <person name="Ardley J."/>
            <person name="Brau L."/>
            <person name="Nandesena K."/>
            <person name="Tiwari R."/>
            <person name="Malfatti S."/>
            <person name="Kiss H."/>
            <person name="Lapidus A."/>
            <person name="Copeland A."/>
            <person name="Nolan M."/>
            <person name="Land M."/>
            <person name="Ivanova N."/>
            <person name="Mavromatis K."/>
            <person name="Markowitz V."/>
            <person name="Kyrpides N."/>
            <person name="Melino V."/>
            <person name="Denton M."/>
            <person name="Yates R."/>
            <person name="Howieson J."/>
        </authorList>
    </citation>
    <scope>NUCLEOTIDE SEQUENCE [LARGE SCALE GENOMIC DNA]</scope>
    <source>
        <strain>WSM2304</strain>
    </source>
</reference>
<keyword id="KW-1185">Reference proteome</keyword>
<keyword id="KW-0687">Ribonucleoprotein</keyword>
<keyword id="KW-0689">Ribosomal protein</keyword>
<keyword id="KW-0694">RNA-binding</keyword>
<keyword id="KW-0699">rRNA-binding</keyword>
<evidence type="ECO:0000255" key="1">
    <source>
        <dbReference type="HAMAP-Rule" id="MF_00362"/>
    </source>
</evidence>
<evidence type="ECO:0000305" key="2"/>
<accession>B5ZYS5</accession>
<protein>
    <recommendedName>
        <fullName evidence="1">Large ribosomal subunit protein uL10</fullName>
    </recommendedName>
    <alternativeName>
        <fullName evidence="2">50S ribosomal protein L10</fullName>
    </alternativeName>
</protein>
<comment type="function">
    <text evidence="1">Forms part of the ribosomal stalk, playing a central role in the interaction of the ribosome with GTP-bound translation factors.</text>
</comment>
<comment type="subunit">
    <text evidence="1">Part of the ribosomal stalk of the 50S ribosomal subunit. The N-terminus interacts with L11 and the large rRNA to form the base of the stalk. The C-terminus forms an elongated spine to which L12 dimers bind in a sequential fashion forming a multimeric L10(L12)X complex.</text>
</comment>
<comment type="similarity">
    <text evidence="1">Belongs to the universal ribosomal protein uL10 family.</text>
</comment>